<feature type="chain" id="PRO_0000379799" description="G patch domain-containing protein 8">
    <location>
        <begin position="1"/>
        <end position="1505"/>
    </location>
</feature>
<feature type="domain" description="G-patch" evidence="4">
    <location>
        <begin position="40"/>
        <end position="86"/>
    </location>
</feature>
<feature type="zinc finger region" description="C2H2-type" evidence="3">
    <location>
        <begin position="136"/>
        <end position="160"/>
    </location>
</feature>
<feature type="region of interest" description="Disordered" evidence="5">
    <location>
        <begin position="166"/>
        <end position="244"/>
    </location>
</feature>
<feature type="region of interest" description="Disordered" evidence="5">
    <location>
        <begin position="322"/>
        <end position="393"/>
    </location>
</feature>
<feature type="region of interest" description="Disordered" evidence="5">
    <location>
        <begin position="419"/>
        <end position="537"/>
    </location>
</feature>
<feature type="region of interest" description="Disordered" evidence="5">
    <location>
        <begin position="575"/>
        <end position="1304"/>
    </location>
</feature>
<feature type="coiled-coil region" evidence="2">
    <location>
        <begin position="89"/>
        <end position="124"/>
    </location>
</feature>
<feature type="compositionally biased region" description="Basic and acidic residues" evidence="5">
    <location>
        <begin position="166"/>
        <end position="175"/>
    </location>
</feature>
<feature type="compositionally biased region" description="Basic and acidic residues" evidence="5">
    <location>
        <begin position="182"/>
        <end position="206"/>
    </location>
</feature>
<feature type="compositionally biased region" description="Acidic residues" evidence="5">
    <location>
        <begin position="223"/>
        <end position="233"/>
    </location>
</feature>
<feature type="compositionally biased region" description="Basic and acidic residues" evidence="5">
    <location>
        <begin position="322"/>
        <end position="339"/>
    </location>
</feature>
<feature type="compositionally biased region" description="Basic and acidic residues" evidence="5">
    <location>
        <begin position="421"/>
        <end position="436"/>
    </location>
</feature>
<feature type="compositionally biased region" description="Polar residues" evidence="5">
    <location>
        <begin position="437"/>
        <end position="449"/>
    </location>
</feature>
<feature type="compositionally biased region" description="Basic and acidic residues" evidence="5">
    <location>
        <begin position="575"/>
        <end position="612"/>
    </location>
</feature>
<feature type="compositionally biased region" description="Basic and acidic residues" evidence="5">
    <location>
        <begin position="648"/>
        <end position="665"/>
    </location>
</feature>
<feature type="compositionally biased region" description="Basic residues" evidence="5">
    <location>
        <begin position="666"/>
        <end position="687"/>
    </location>
</feature>
<feature type="compositionally biased region" description="Basic and acidic residues" evidence="5">
    <location>
        <begin position="688"/>
        <end position="702"/>
    </location>
</feature>
<feature type="compositionally biased region" description="Basic residues" evidence="5">
    <location>
        <begin position="703"/>
        <end position="715"/>
    </location>
</feature>
<feature type="compositionally biased region" description="Basic and acidic residues" evidence="5">
    <location>
        <begin position="745"/>
        <end position="767"/>
    </location>
</feature>
<feature type="compositionally biased region" description="Basic residues" evidence="5">
    <location>
        <begin position="794"/>
        <end position="804"/>
    </location>
</feature>
<feature type="compositionally biased region" description="Acidic residues" evidence="5">
    <location>
        <begin position="832"/>
        <end position="849"/>
    </location>
</feature>
<feature type="compositionally biased region" description="Basic residues" evidence="5">
    <location>
        <begin position="856"/>
        <end position="871"/>
    </location>
</feature>
<feature type="compositionally biased region" description="Low complexity" evidence="5">
    <location>
        <begin position="872"/>
        <end position="900"/>
    </location>
</feature>
<feature type="compositionally biased region" description="Basic residues" evidence="5">
    <location>
        <begin position="923"/>
        <end position="932"/>
    </location>
</feature>
<feature type="compositionally biased region" description="Basic and acidic residues" evidence="5">
    <location>
        <begin position="1017"/>
        <end position="1031"/>
    </location>
</feature>
<feature type="compositionally biased region" description="Basic and acidic residues" evidence="5">
    <location>
        <begin position="1050"/>
        <end position="1063"/>
    </location>
</feature>
<feature type="compositionally biased region" description="Basic and acidic residues" evidence="5">
    <location>
        <begin position="1097"/>
        <end position="1112"/>
    </location>
</feature>
<feature type="compositionally biased region" description="Basic and acidic residues" evidence="5">
    <location>
        <begin position="1163"/>
        <end position="1185"/>
    </location>
</feature>
<feature type="compositionally biased region" description="Basic and acidic residues" evidence="5">
    <location>
        <begin position="1211"/>
        <end position="1220"/>
    </location>
</feature>
<feature type="modified residue" description="N6-acetyllysine" evidence="8">
    <location>
        <position position="479"/>
    </location>
</feature>
<feature type="modified residue" description="Phosphoserine" evidence="1">
    <location>
        <position position="648"/>
    </location>
</feature>
<feature type="modified residue" description="Phosphoserine" evidence="1">
    <location>
        <position position="733"/>
    </location>
</feature>
<feature type="modified residue" description="Phosphoserine" evidence="1">
    <location>
        <position position="735"/>
    </location>
</feature>
<feature type="modified residue" description="Phosphoserine" evidence="1">
    <location>
        <position position="753"/>
    </location>
</feature>
<feature type="modified residue" description="Phosphoserine" evidence="7">
    <location>
        <position position="915"/>
    </location>
</feature>
<feature type="modified residue" description="Phosphoserine" evidence="7">
    <location>
        <position position="918"/>
    </location>
</feature>
<feature type="modified residue" description="Phosphoserine" evidence="1">
    <location>
        <position position="985"/>
    </location>
</feature>
<feature type="modified residue" description="Phosphoserine" evidence="1">
    <location>
        <position position="1013"/>
    </location>
</feature>
<feature type="modified residue" description="Phosphoserine" evidence="1">
    <location>
        <position position="1018"/>
    </location>
</feature>
<feature type="modified residue" description="Phosphoserine" evidence="1">
    <location>
        <position position="1037"/>
    </location>
</feature>
<feature type="modified residue" description="Phosphoserine" evidence="1">
    <location>
        <position position="1039"/>
    </location>
</feature>
<feature type="modified residue" description="Phosphoserine" evidence="1">
    <location>
        <position position="1085"/>
    </location>
</feature>
<feature type="modified residue" description="Phosphoserine" evidence="7">
    <location>
        <position position="1179"/>
    </location>
</feature>
<feature type="cross-link" description="Glycyl lysine isopeptide (Lys-Gly) (interchain with G-Cter in SUMO2)" evidence="1">
    <location>
        <position position="311"/>
    </location>
</feature>
<feature type="cross-link" description="Glycyl lysine isopeptide (Lys-Gly) (interchain with G-Cter in SUMO2)" evidence="1">
    <location>
        <position position="573"/>
    </location>
</feature>
<feature type="cross-link" description="Glycyl lysine isopeptide (Lys-Gly) (interchain with G-Cter in SUMO2)" evidence="1">
    <location>
        <position position="1109"/>
    </location>
</feature>
<feature type="sequence conflict" description="In Ref. 2; BAC65589." evidence="6" ref="2">
    <original>T</original>
    <variation>I</variation>
    <location>
        <position position="954"/>
    </location>
</feature>
<protein>
    <recommendedName>
        <fullName>G patch domain-containing protein 8</fullName>
    </recommendedName>
</protein>
<reference key="1">
    <citation type="journal article" date="2009" name="PLoS Biol.">
        <title>Lineage-specific biology revealed by a finished genome assembly of the mouse.</title>
        <authorList>
            <person name="Church D.M."/>
            <person name="Goodstadt L."/>
            <person name="Hillier L.W."/>
            <person name="Zody M.C."/>
            <person name="Goldstein S."/>
            <person name="She X."/>
            <person name="Bult C.J."/>
            <person name="Agarwala R."/>
            <person name="Cherry J.L."/>
            <person name="DiCuccio M."/>
            <person name="Hlavina W."/>
            <person name="Kapustin Y."/>
            <person name="Meric P."/>
            <person name="Maglott D."/>
            <person name="Birtle Z."/>
            <person name="Marques A.C."/>
            <person name="Graves T."/>
            <person name="Zhou S."/>
            <person name="Teague B."/>
            <person name="Potamousis K."/>
            <person name="Churas C."/>
            <person name="Place M."/>
            <person name="Herschleb J."/>
            <person name="Runnheim R."/>
            <person name="Forrest D."/>
            <person name="Amos-Landgraf J."/>
            <person name="Schwartz D.C."/>
            <person name="Cheng Z."/>
            <person name="Lindblad-Toh K."/>
            <person name="Eichler E.E."/>
            <person name="Ponting C.P."/>
        </authorList>
    </citation>
    <scope>NUCLEOTIDE SEQUENCE [LARGE SCALE GENOMIC DNA]</scope>
    <source>
        <strain>C57BL/6J</strain>
    </source>
</reference>
<reference key="2">
    <citation type="journal article" date="2003" name="DNA Res.">
        <title>Prediction of the coding sequences of mouse homologues of KIAA gene: II. The complete nucleotide sequences of 400 mouse KIAA-homologous cDNAs identified by screening of terminal sequences of cDNA clones randomly sampled from size-fractionated libraries.</title>
        <authorList>
            <person name="Okazaki N."/>
            <person name="Kikuno R."/>
            <person name="Ohara R."/>
            <person name="Inamoto S."/>
            <person name="Aizawa H."/>
            <person name="Yuasa S."/>
            <person name="Nakajima D."/>
            <person name="Nagase T."/>
            <person name="Ohara O."/>
            <person name="Koga H."/>
        </authorList>
    </citation>
    <scope>NUCLEOTIDE SEQUENCE [LARGE SCALE MRNA] OF 840-1505</scope>
    <source>
        <tissue>Brain</tissue>
    </source>
</reference>
<reference key="3">
    <citation type="journal article" date="2010" name="Cell">
        <title>A tissue-specific atlas of mouse protein phosphorylation and expression.</title>
        <authorList>
            <person name="Huttlin E.L."/>
            <person name="Jedrychowski M.P."/>
            <person name="Elias J.E."/>
            <person name="Goswami T."/>
            <person name="Rad R."/>
            <person name="Beausoleil S.A."/>
            <person name="Villen J."/>
            <person name="Haas W."/>
            <person name="Sowa M.E."/>
            <person name="Gygi S.P."/>
        </authorList>
    </citation>
    <scope>PHOSPHORYLATION [LARGE SCALE ANALYSIS] AT SER-915; SER-918 AND SER-1179</scope>
    <scope>IDENTIFICATION BY MASS SPECTROMETRY [LARGE SCALE ANALYSIS]</scope>
    <source>
        <tissue>Testis</tissue>
    </source>
</reference>
<reference key="4">
    <citation type="journal article" date="2013" name="Mol. Cell">
        <title>SIRT5-mediated lysine desuccinylation impacts diverse metabolic pathways.</title>
        <authorList>
            <person name="Park J."/>
            <person name="Chen Y."/>
            <person name="Tishkoff D.X."/>
            <person name="Peng C."/>
            <person name="Tan M."/>
            <person name="Dai L."/>
            <person name="Xie Z."/>
            <person name="Zhang Y."/>
            <person name="Zwaans B.M."/>
            <person name="Skinner M.E."/>
            <person name="Lombard D.B."/>
            <person name="Zhao Y."/>
        </authorList>
    </citation>
    <scope>ACETYLATION [LARGE SCALE ANALYSIS] AT LYS-479</scope>
    <scope>IDENTIFICATION BY MASS SPECTROMETRY [LARGE SCALE ANALYSIS]</scope>
    <source>
        <tissue>Embryonic fibroblast</tissue>
    </source>
</reference>
<keyword id="KW-0007">Acetylation</keyword>
<keyword id="KW-0175">Coiled coil</keyword>
<keyword id="KW-1017">Isopeptide bond</keyword>
<keyword id="KW-0479">Metal-binding</keyword>
<keyword id="KW-0597">Phosphoprotein</keyword>
<keyword id="KW-1185">Reference proteome</keyword>
<keyword id="KW-0832">Ubl conjugation</keyword>
<keyword id="KW-0862">Zinc</keyword>
<keyword id="KW-0863">Zinc-finger</keyword>
<gene>
    <name type="primary">Gpatch8</name>
    <name type="synonym">Gpatc8</name>
    <name type="synonym">Kiaa0553</name>
</gene>
<organism>
    <name type="scientific">Mus musculus</name>
    <name type="common">Mouse</name>
    <dbReference type="NCBI Taxonomy" id="10090"/>
    <lineage>
        <taxon>Eukaryota</taxon>
        <taxon>Metazoa</taxon>
        <taxon>Chordata</taxon>
        <taxon>Craniata</taxon>
        <taxon>Vertebrata</taxon>
        <taxon>Euteleostomi</taxon>
        <taxon>Mammalia</taxon>
        <taxon>Eutheria</taxon>
        <taxon>Euarchontoglires</taxon>
        <taxon>Glires</taxon>
        <taxon>Rodentia</taxon>
        <taxon>Myomorpha</taxon>
        <taxon>Muroidea</taxon>
        <taxon>Muridae</taxon>
        <taxon>Murinae</taxon>
        <taxon>Mus</taxon>
        <taxon>Mus</taxon>
    </lineage>
</organism>
<proteinExistence type="evidence at protein level"/>
<sequence length="1505" mass="164987">MADRFSRFNEDRDFQGNHFDQYEEGHLEIEQASLDKPIESDNIGHRLLQKHGWKLGQGLGKSLQGRTDPIPIVVKYDVMGMGRMEMELDYAEDATERRRVLEVEKEDTEELRQKYKDYVDKEKAIAKALEDLRANFYCELCDKQYQKHQEFDNHINSYDHAHKQRLKDLKQREFARNVSSRSRKDEKKQEKALRRLHELAEQRKQAECAPGSGPMFRPTTVAVDEDGGEEDKDESSTNSGASAVSSCGFGADFSTDKGGSFTSVQITNTTGLSQAPGLASQGISFGIKNNLGPPLQKLGVSFSFAKKAPVKLESIASVFKDHAEEGSSEDGTKADEKSSDQGVQKVGDTDGTGNLDGKKEDEDPQDGGSLASTLSKLKRMKREEGTGATEPEYYHYIPPAHCKVKPNFPFLLFMRASEQMEGDHSAHSKSAPENRKSSSPKPQGCSKTAASPGAERTVSEASELQKEAAVAGPSEPGGKTETKKGSGGGEDEQSVESRETSESPMCESNPKDISQATPATKAGQGPKHPTGPFFPVLSKDESTALQWPSELLIFTKAEPSISYSCNPLYFDFKLSRNKDAKAKGTEKPKDVAGSSKDHLQSLDPREPNKSQEEEQDVVLSSEGRVDEPASGAACSSLNKQEPGGSHMSETEDTGRSHPSKKEPSGKSHRHKKKKKHKKSSKHKRKHKADTEEKSSKAESGEKSKKRKKRKRKKNKSSAAADSERGPKSEPPGSGSPAPPRRRRRAQDDSQRRSLPAEEGNSGKKDDGGGGSSCQDHSGRKHKGEPPTSSCQRRANTKHSSRSSHRSQPSSGDEDSDDASSHRLHQKSPSQYSEEEEEEEEEEEEEDEDSGSEHSRSRSRSGHRHSSHRSSRRSYSSSSDASSDQSCYSRQHSYSDDSYSDYSDRSRRHSKRSHDSDDSDYTSSKHRSKRHKYSSSDDDYSLSCSQSRSRSRSHTRERSRSRGRSRSSSCSRSRSKRRSRSTTAHSWQRSRSYSRDRSRSTRSPSQRSGSRKGSWGHESPEERRSGRRDFIRSKIYRSQSPHYFQSGRGEGPGKKEDGRGDDSKGAGLPSQNSNTGTGRGSESDCSPEDKNSVTARLLLEKIQSRKVERKPNVCEEVLATPNKAGLKYKNPPQGYFGPKLPPSLGNKPVLPMIGKLPATRKSNKKCEESGLERGEEQEHSEPEEGSPRSSDAPFGHQFSEEAAGPLSDPPPEEPKSEEATADHSVAPLGTPAHTDCYPGDPAISHNYLPDPSDGDTLESLDSGSQPGPVESSLLPIAPDLEHFPNYAPPSGEPSIESTDGTEDASLAPLESQPITFTPEEMEKYSKLQQAAQQHIQQQLLAKQVKAFPASTALAPATPALQPIHIQQPATASATSITTVQHAILQHHAAAAAAAIGIHPHPHPQPLAQVHHIPQPHLTPISLSHLTHSIIPGHPATFLASHPIHIIPASAIHPGPFTFHPVPHAALYPTLLAPRPAAAAATALHLHPLLHPIFSGQDLQHPPSHGT</sequence>
<evidence type="ECO:0000250" key="1">
    <source>
        <dbReference type="UniProtKB" id="Q9UKJ3"/>
    </source>
</evidence>
<evidence type="ECO:0000255" key="2"/>
<evidence type="ECO:0000255" key="3">
    <source>
        <dbReference type="PROSITE-ProRule" id="PRU00042"/>
    </source>
</evidence>
<evidence type="ECO:0000255" key="4">
    <source>
        <dbReference type="PROSITE-ProRule" id="PRU00092"/>
    </source>
</evidence>
<evidence type="ECO:0000256" key="5">
    <source>
        <dbReference type="SAM" id="MobiDB-lite"/>
    </source>
</evidence>
<evidence type="ECO:0000305" key="6"/>
<evidence type="ECO:0007744" key="7">
    <source>
    </source>
</evidence>
<evidence type="ECO:0007744" key="8">
    <source>
    </source>
</evidence>
<name>GPTC8_MOUSE</name>
<accession>A2A6A1</accession>
<accession>Q80TY1</accession>
<dbReference type="EMBL" id="AL596258">
    <property type="status" value="NOT_ANNOTATED_CDS"/>
    <property type="molecule type" value="Genomic_DNA"/>
</dbReference>
<dbReference type="EMBL" id="AK122307">
    <property type="protein sequence ID" value="BAC65589.1"/>
    <property type="molecule type" value="mRNA"/>
</dbReference>
<dbReference type="CCDS" id="CCDS48944.1"/>
<dbReference type="RefSeq" id="NP_001152964.1">
    <property type="nucleotide sequence ID" value="NM_001159492.1"/>
</dbReference>
<dbReference type="SMR" id="A2A6A1"/>
<dbReference type="BioGRID" id="231931">
    <property type="interactions" value="7"/>
</dbReference>
<dbReference type="FunCoup" id="A2A6A1">
    <property type="interactions" value="3573"/>
</dbReference>
<dbReference type="STRING" id="10090.ENSMUSP00000120649"/>
<dbReference type="GlyGen" id="A2A6A1">
    <property type="glycosylation" value="7 sites, 1 O-linked glycan (4 sites)"/>
</dbReference>
<dbReference type="iPTMnet" id="A2A6A1"/>
<dbReference type="PhosphoSitePlus" id="A2A6A1"/>
<dbReference type="jPOST" id="A2A6A1"/>
<dbReference type="PaxDb" id="10090-ENSMUSP00000120649"/>
<dbReference type="PeptideAtlas" id="A2A6A1"/>
<dbReference type="ProteomicsDB" id="271081"/>
<dbReference type="Pumba" id="A2A6A1"/>
<dbReference type="Antibodypedia" id="52434">
    <property type="antibodies" value="30 antibodies from 13 providers"/>
</dbReference>
<dbReference type="Ensembl" id="ENSMUST00000143842.2">
    <property type="protein sequence ID" value="ENSMUSP00000120649.2"/>
    <property type="gene ID" value="ENSMUSG00000034621.15"/>
</dbReference>
<dbReference type="GeneID" id="237943"/>
<dbReference type="KEGG" id="mmu:237943"/>
<dbReference type="UCSC" id="uc007lsb.2">
    <property type="organism name" value="mouse"/>
</dbReference>
<dbReference type="AGR" id="MGI:1918667"/>
<dbReference type="CTD" id="23131"/>
<dbReference type="MGI" id="MGI:1918667">
    <property type="gene designation" value="Gpatch8"/>
</dbReference>
<dbReference type="VEuPathDB" id="HostDB:ENSMUSG00000034621"/>
<dbReference type="eggNOG" id="KOG2184">
    <property type="taxonomic scope" value="Eukaryota"/>
</dbReference>
<dbReference type="GeneTree" id="ENSGT00940000159523"/>
<dbReference type="HOGENOM" id="CLU_006418_0_0_1"/>
<dbReference type="InParanoid" id="A2A6A1"/>
<dbReference type="OMA" id="DHGGKKH"/>
<dbReference type="OrthoDB" id="4822at2759"/>
<dbReference type="PhylomeDB" id="A2A6A1"/>
<dbReference type="TreeFam" id="TF332138"/>
<dbReference type="BioGRID-ORCS" id="237943">
    <property type="hits" value="9 hits in 77 CRISPR screens"/>
</dbReference>
<dbReference type="ChiTaRS" id="Gpatch8">
    <property type="organism name" value="mouse"/>
</dbReference>
<dbReference type="PRO" id="PR:A2A6A1"/>
<dbReference type="Proteomes" id="UP000000589">
    <property type="component" value="Chromosome 11"/>
</dbReference>
<dbReference type="RNAct" id="A2A6A1">
    <property type="molecule type" value="protein"/>
</dbReference>
<dbReference type="Bgee" id="ENSMUSG00000034621">
    <property type="expression patterns" value="Expressed in otic placode and 253 other cell types or tissues"/>
</dbReference>
<dbReference type="GO" id="GO:0003729">
    <property type="term" value="F:mRNA binding"/>
    <property type="evidence" value="ECO:0000314"/>
    <property type="project" value="MGI"/>
</dbReference>
<dbReference type="GO" id="GO:0008270">
    <property type="term" value="F:zinc ion binding"/>
    <property type="evidence" value="ECO:0007669"/>
    <property type="project" value="UniProtKB-KW"/>
</dbReference>
<dbReference type="GO" id="GO:0030097">
    <property type="term" value="P:hemopoiesis"/>
    <property type="evidence" value="ECO:0000315"/>
    <property type="project" value="MGI"/>
</dbReference>
<dbReference type="GO" id="GO:0000398">
    <property type="term" value="P:mRNA splicing, via spliceosome"/>
    <property type="evidence" value="ECO:0000315"/>
    <property type="project" value="MGI"/>
</dbReference>
<dbReference type="InterPro" id="IPR000467">
    <property type="entry name" value="G_patch_dom"/>
</dbReference>
<dbReference type="InterPro" id="IPR052445">
    <property type="entry name" value="ZnF-G_patch_domain"/>
</dbReference>
<dbReference type="InterPro" id="IPR036236">
    <property type="entry name" value="Znf_C2H2_sf"/>
</dbReference>
<dbReference type="InterPro" id="IPR013087">
    <property type="entry name" value="Znf_C2H2_type"/>
</dbReference>
<dbReference type="PANTHER" id="PTHR17614:SF11">
    <property type="entry name" value="G PATCH DOMAIN-CONTAINING PROTEIN 8"/>
    <property type="match status" value="1"/>
</dbReference>
<dbReference type="PANTHER" id="PTHR17614">
    <property type="entry name" value="ZINC FINGER-CONTAINING"/>
    <property type="match status" value="1"/>
</dbReference>
<dbReference type="Pfam" id="PF01585">
    <property type="entry name" value="G-patch"/>
    <property type="match status" value="1"/>
</dbReference>
<dbReference type="SMART" id="SM00443">
    <property type="entry name" value="G_patch"/>
    <property type="match status" value="1"/>
</dbReference>
<dbReference type="SUPFAM" id="SSF57667">
    <property type="entry name" value="beta-beta-alpha zinc fingers"/>
    <property type="match status" value="1"/>
</dbReference>
<dbReference type="PROSITE" id="PS50174">
    <property type="entry name" value="G_PATCH"/>
    <property type="match status" value="1"/>
</dbReference>
<dbReference type="PROSITE" id="PS00028">
    <property type="entry name" value="ZINC_FINGER_C2H2_1"/>
    <property type="match status" value="1"/>
</dbReference>
<dbReference type="PROSITE" id="PS50157">
    <property type="entry name" value="ZINC_FINGER_C2H2_2"/>
    <property type="match status" value="1"/>
</dbReference>